<reference key="1">
    <citation type="journal article" date="2004" name="Plant Physiol.">
        <title>A comparison of rice chloroplast genomes.</title>
        <authorList>
            <person name="Tang J."/>
            <person name="Xia H."/>
            <person name="Cao M."/>
            <person name="Zhang X."/>
            <person name="Zeng W."/>
            <person name="Hu S."/>
            <person name="Tong W."/>
            <person name="Wang J."/>
            <person name="Wang J."/>
            <person name="Yu J."/>
            <person name="Yang H."/>
            <person name="Zhu L."/>
        </authorList>
    </citation>
    <scope>NUCLEOTIDE SEQUENCE [LARGE SCALE GENOMIC DNA]</scope>
    <source>
        <strain>cv. 93-11</strain>
    </source>
</reference>
<comment type="function">
    <text evidence="1">One of the components of the core complex of photosystem II (PSII). PSII is a light-driven water:plastoquinone oxidoreductase that uses light energy to abstract electrons from H(2)O, generating O(2) and a proton gradient subsequently used for ATP formation. It consists of a core antenna complex that captures photons, and an electron transfer chain that converts photonic excitation into a charge separation.</text>
</comment>
<comment type="subunit">
    <text evidence="1">PSII is composed of 1 copy each of membrane proteins PsbA, PsbB, PsbC, PsbD, PsbE, PsbF, PsbH, PsbI, PsbJ, PsbK, PsbL, PsbM, PsbT, PsbX, PsbY, PsbZ, Psb30/Ycf12, at least 3 peripheral proteins of the oxygen-evolving complex and a large number of cofactors. It forms dimeric complexes.</text>
</comment>
<comment type="subcellular location">
    <subcellularLocation>
        <location evidence="1">Plastid</location>
        <location evidence="1">Chloroplast thylakoid membrane</location>
        <topology evidence="1">Single-pass membrane protein</topology>
    </subcellularLocation>
</comment>
<comment type="similarity">
    <text evidence="1">Belongs to the PsbJ family.</text>
</comment>
<sequence length="40" mass="4105">MADTTGRIPLWLIGTVTGIAVIGLIGVFFYGSYSGLGSSL</sequence>
<protein>
    <recommendedName>
        <fullName evidence="1">Photosystem II reaction center protein J</fullName>
        <shortName evidence="1">PSII-J</shortName>
    </recommendedName>
</protein>
<accession>P0C415</accession>
<feature type="chain" id="PRO_0000289563" description="Photosystem II reaction center protein J">
    <location>
        <begin position="1"/>
        <end position="40"/>
    </location>
</feature>
<feature type="transmembrane region" description="Helical" evidence="1">
    <location>
        <begin position="8"/>
        <end position="28"/>
    </location>
</feature>
<keyword id="KW-0150">Chloroplast</keyword>
<keyword id="KW-0472">Membrane</keyword>
<keyword id="KW-0602">Photosynthesis</keyword>
<keyword id="KW-0604">Photosystem II</keyword>
<keyword id="KW-0934">Plastid</keyword>
<keyword id="KW-0674">Reaction center</keyword>
<keyword id="KW-1185">Reference proteome</keyword>
<keyword id="KW-0793">Thylakoid</keyword>
<keyword id="KW-0812">Transmembrane</keyword>
<keyword id="KW-1133">Transmembrane helix</keyword>
<geneLocation type="chloroplast"/>
<name>PSBJ_ORYSI</name>
<dbReference type="EMBL" id="AY522329">
    <property type="status" value="NOT_ANNOTATED_CDS"/>
    <property type="molecule type" value="Genomic_DNA"/>
</dbReference>
<dbReference type="RefSeq" id="YP_009161378.1">
    <property type="nucleotide sequence ID" value="NC_027678.1"/>
</dbReference>
<dbReference type="SMR" id="P0C415"/>
<dbReference type="STRING" id="39946.P0C415"/>
<dbReference type="Proteomes" id="UP000007015">
    <property type="component" value="Chloroplast"/>
</dbReference>
<dbReference type="GO" id="GO:0009535">
    <property type="term" value="C:chloroplast thylakoid membrane"/>
    <property type="evidence" value="ECO:0007669"/>
    <property type="project" value="UniProtKB-SubCell"/>
</dbReference>
<dbReference type="GO" id="GO:0009539">
    <property type="term" value="C:photosystem II reaction center"/>
    <property type="evidence" value="ECO:0007669"/>
    <property type="project" value="InterPro"/>
</dbReference>
<dbReference type="GO" id="GO:0009536">
    <property type="term" value="C:plastid"/>
    <property type="evidence" value="ECO:0000305"/>
    <property type="project" value="Gramene"/>
</dbReference>
<dbReference type="GO" id="GO:0015979">
    <property type="term" value="P:photosynthesis"/>
    <property type="evidence" value="ECO:0007669"/>
    <property type="project" value="UniProtKB-UniRule"/>
</dbReference>
<dbReference type="Gene3D" id="6.10.250.2070">
    <property type="match status" value="1"/>
</dbReference>
<dbReference type="HAMAP" id="MF_01305">
    <property type="entry name" value="PSII_PsbJ"/>
    <property type="match status" value="1"/>
</dbReference>
<dbReference type="InterPro" id="IPR002682">
    <property type="entry name" value="PSII_PsbJ"/>
</dbReference>
<dbReference type="InterPro" id="IPR037267">
    <property type="entry name" value="PSII_PsbJ_sf"/>
</dbReference>
<dbReference type="NCBIfam" id="NF002722">
    <property type="entry name" value="PRK02565.1"/>
    <property type="match status" value="1"/>
</dbReference>
<dbReference type="PANTHER" id="PTHR34812">
    <property type="entry name" value="PHOTOSYSTEM II REACTION CENTER PROTEIN J"/>
    <property type="match status" value="1"/>
</dbReference>
<dbReference type="PANTHER" id="PTHR34812:SF3">
    <property type="entry name" value="PHOTOSYSTEM II REACTION CENTER PROTEIN J"/>
    <property type="match status" value="1"/>
</dbReference>
<dbReference type="Pfam" id="PF01788">
    <property type="entry name" value="PsbJ"/>
    <property type="match status" value="1"/>
</dbReference>
<dbReference type="SUPFAM" id="SSF161021">
    <property type="entry name" value="Photosystem II reaction center protein J, PsbJ"/>
    <property type="match status" value="1"/>
</dbReference>
<gene>
    <name evidence="1" type="primary">psbJ</name>
</gene>
<proteinExistence type="inferred from homology"/>
<organism>
    <name type="scientific">Oryza sativa subsp. indica</name>
    <name type="common">Rice</name>
    <dbReference type="NCBI Taxonomy" id="39946"/>
    <lineage>
        <taxon>Eukaryota</taxon>
        <taxon>Viridiplantae</taxon>
        <taxon>Streptophyta</taxon>
        <taxon>Embryophyta</taxon>
        <taxon>Tracheophyta</taxon>
        <taxon>Spermatophyta</taxon>
        <taxon>Magnoliopsida</taxon>
        <taxon>Liliopsida</taxon>
        <taxon>Poales</taxon>
        <taxon>Poaceae</taxon>
        <taxon>BOP clade</taxon>
        <taxon>Oryzoideae</taxon>
        <taxon>Oryzeae</taxon>
        <taxon>Oryzinae</taxon>
        <taxon>Oryza</taxon>
        <taxon>Oryza sativa</taxon>
    </lineage>
</organism>
<evidence type="ECO:0000255" key="1">
    <source>
        <dbReference type="HAMAP-Rule" id="MF_01305"/>
    </source>
</evidence>